<feature type="chain" id="PRO_1000206164" description="ATP-dependent Clp protease proteolytic subunit">
    <location>
        <begin position="1"/>
        <end position="214"/>
    </location>
</feature>
<feature type="active site" description="Nucleophile" evidence="1">
    <location>
        <position position="113"/>
    </location>
</feature>
<feature type="active site" evidence="1">
    <location>
        <position position="138"/>
    </location>
</feature>
<reference key="1">
    <citation type="journal article" date="2009" name="PLoS ONE">
        <title>The complete genome of Teredinibacter turnerae T7901: an intracellular endosymbiont of marine wood-boring bivalves (shipworms).</title>
        <authorList>
            <person name="Yang J.C."/>
            <person name="Madupu R."/>
            <person name="Durkin A.S."/>
            <person name="Ekborg N.A."/>
            <person name="Pedamallu C.S."/>
            <person name="Hostetler J.B."/>
            <person name="Radune D."/>
            <person name="Toms B.S."/>
            <person name="Henrissat B."/>
            <person name="Coutinho P.M."/>
            <person name="Schwarz S."/>
            <person name="Field L."/>
            <person name="Trindade-Silva A.E."/>
            <person name="Soares C.A.G."/>
            <person name="Elshahawi S."/>
            <person name="Hanora A."/>
            <person name="Schmidt E.W."/>
            <person name="Haygood M.G."/>
            <person name="Posfai J."/>
            <person name="Benner J."/>
            <person name="Madinger C."/>
            <person name="Nove J."/>
            <person name="Anton B."/>
            <person name="Chaudhary K."/>
            <person name="Foster J."/>
            <person name="Holman A."/>
            <person name="Kumar S."/>
            <person name="Lessard P.A."/>
            <person name="Luyten Y.A."/>
            <person name="Slatko B."/>
            <person name="Wood N."/>
            <person name="Wu B."/>
            <person name="Teplitski M."/>
            <person name="Mougous J.D."/>
            <person name="Ward N."/>
            <person name="Eisen J.A."/>
            <person name="Badger J.H."/>
            <person name="Distel D.L."/>
        </authorList>
    </citation>
    <scope>NUCLEOTIDE SEQUENCE [LARGE SCALE GENOMIC DNA]</scope>
    <source>
        <strain>ATCC 39867 / T7901</strain>
    </source>
</reference>
<organism>
    <name type="scientific">Teredinibacter turnerae (strain ATCC 39867 / T7901)</name>
    <dbReference type="NCBI Taxonomy" id="377629"/>
    <lineage>
        <taxon>Bacteria</taxon>
        <taxon>Pseudomonadati</taxon>
        <taxon>Pseudomonadota</taxon>
        <taxon>Gammaproteobacteria</taxon>
        <taxon>Cellvibrionales</taxon>
        <taxon>Cellvibrionaceae</taxon>
        <taxon>Teredinibacter</taxon>
    </lineage>
</organism>
<evidence type="ECO:0000255" key="1">
    <source>
        <dbReference type="HAMAP-Rule" id="MF_00444"/>
    </source>
</evidence>
<sequence length="214" mass="23569">MSQFNPMGGQSTTIQSSLVPIVVEQTARGERSYDIYSRLLKERVIFLVGQVEDHMANLVVAQLLFLEAENPDKDIHLYINSPGGSVTAGMSIYDTMQFIKPDVSTMCIGQACSMGSFLLSAGATGKRFCLPNARTMIHQPSGGAQGQASDIHIHAQEILKIRARLNEIMAKHTGKSVEEVARDTERDNFMSAEESKAYGLVDDVLYQRVPEESK</sequence>
<gene>
    <name evidence="1" type="primary">clpP</name>
    <name type="ordered locus">TERTU_1624</name>
</gene>
<dbReference type="EC" id="3.4.21.92" evidence="1"/>
<dbReference type="EMBL" id="CP001614">
    <property type="protein sequence ID" value="ACR11619.1"/>
    <property type="molecule type" value="Genomic_DNA"/>
</dbReference>
<dbReference type="RefSeq" id="WP_015817731.1">
    <property type="nucleotide sequence ID" value="NC_012997.1"/>
</dbReference>
<dbReference type="SMR" id="C5BTJ0"/>
<dbReference type="STRING" id="377629.TERTU_1624"/>
<dbReference type="MEROPS" id="S14.001"/>
<dbReference type="KEGG" id="ttu:TERTU_1624"/>
<dbReference type="eggNOG" id="COG0740">
    <property type="taxonomic scope" value="Bacteria"/>
</dbReference>
<dbReference type="HOGENOM" id="CLU_058707_3_2_6"/>
<dbReference type="OrthoDB" id="9802800at2"/>
<dbReference type="Proteomes" id="UP000009080">
    <property type="component" value="Chromosome"/>
</dbReference>
<dbReference type="GO" id="GO:0005737">
    <property type="term" value="C:cytoplasm"/>
    <property type="evidence" value="ECO:0007669"/>
    <property type="project" value="UniProtKB-SubCell"/>
</dbReference>
<dbReference type="GO" id="GO:0009368">
    <property type="term" value="C:endopeptidase Clp complex"/>
    <property type="evidence" value="ECO:0007669"/>
    <property type="project" value="TreeGrafter"/>
</dbReference>
<dbReference type="GO" id="GO:0004176">
    <property type="term" value="F:ATP-dependent peptidase activity"/>
    <property type="evidence" value="ECO:0007669"/>
    <property type="project" value="InterPro"/>
</dbReference>
<dbReference type="GO" id="GO:0051117">
    <property type="term" value="F:ATPase binding"/>
    <property type="evidence" value="ECO:0007669"/>
    <property type="project" value="TreeGrafter"/>
</dbReference>
<dbReference type="GO" id="GO:0004252">
    <property type="term" value="F:serine-type endopeptidase activity"/>
    <property type="evidence" value="ECO:0007669"/>
    <property type="project" value="UniProtKB-UniRule"/>
</dbReference>
<dbReference type="GO" id="GO:0006515">
    <property type="term" value="P:protein quality control for misfolded or incompletely synthesized proteins"/>
    <property type="evidence" value="ECO:0007669"/>
    <property type="project" value="TreeGrafter"/>
</dbReference>
<dbReference type="CDD" id="cd07017">
    <property type="entry name" value="S14_ClpP_2"/>
    <property type="match status" value="1"/>
</dbReference>
<dbReference type="FunFam" id="3.90.226.10:FF:000001">
    <property type="entry name" value="ATP-dependent Clp protease proteolytic subunit"/>
    <property type="match status" value="1"/>
</dbReference>
<dbReference type="Gene3D" id="3.90.226.10">
    <property type="entry name" value="2-enoyl-CoA Hydratase, Chain A, domain 1"/>
    <property type="match status" value="1"/>
</dbReference>
<dbReference type="HAMAP" id="MF_00444">
    <property type="entry name" value="ClpP"/>
    <property type="match status" value="1"/>
</dbReference>
<dbReference type="InterPro" id="IPR001907">
    <property type="entry name" value="ClpP"/>
</dbReference>
<dbReference type="InterPro" id="IPR029045">
    <property type="entry name" value="ClpP/crotonase-like_dom_sf"/>
</dbReference>
<dbReference type="InterPro" id="IPR023562">
    <property type="entry name" value="ClpP/TepA"/>
</dbReference>
<dbReference type="InterPro" id="IPR033135">
    <property type="entry name" value="ClpP_His_AS"/>
</dbReference>
<dbReference type="InterPro" id="IPR018215">
    <property type="entry name" value="ClpP_Ser_AS"/>
</dbReference>
<dbReference type="NCBIfam" id="TIGR00493">
    <property type="entry name" value="clpP"/>
    <property type="match status" value="1"/>
</dbReference>
<dbReference type="NCBIfam" id="NF001368">
    <property type="entry name" value="PRK00277.1"/>
    <property type="match status" value="1"/>
</dbReference>
<dbReference type="NCBIfam" id="NF009205">
    <property type="entry name" value="PRK12553.1"/>
    <property type="match status" value="1"/>
</dbReference>
<dbReference type="PANTHER" id="PTHR10381">
    <property type="entry name" value="ATP-DEPENDENT CLP PROTEASE PROTEOLYTIC SUBUNIT"/>
    <property type="match status" value="1"/>
</dbReference>
<dbReference type="PANTHER" id="PTHR10381:SF70">
    <property type="entry name" value="ATP-DEPENDENT CLP PROTEASE PROTEOLYTIC SUBUNIT"/>
    <property type="match status" value="1"/>
</dbReference>
<dbReference type="Pfam" id="PF00574">
    <property type="entry name" value="CLP_protease"/>
    <property type="match status" value="1"/>
</dbReference>
<dbReference type="PRINTS" id="PR00127">
    <property type="entry name" value="CLPPROTEASEP"/>
</dbReference>
<dbReference type="SUPFAM" id="SSF52096">
    <property type="entry name" value="ClpP/crotonase"/>
    <property type="match status" value="1"/>
</dbReference>
<dbReference type="PROSITE" id="PS00382">
    <property type="entry name" value="CLP_PROTEASE_HIS"/>
    <property type="match status" value="1"/>
</dbReference>
<dbReference type="PROSITE" id="PS00381">
    <property type="entry name" value="CLP_PROTEASE_SER"/>
    <property type="match status" value="1"/>
</dbReference>
<name>CLPP_TERTT</name>
<keyword id="KW-0963">Cytoplasm</keyword>
<keyword id="KW-0378">Hydrolase</keyword>
<keyword id="KW-0645">Protease</keyword>
<keyword id="KW-1185">Reference proteome</keyword>
<keyword id="KW-0720">Serine protease</keyword>
<comment type="function">
    <text evidence="1">Cleaves peptides in various proteins in a process that requires ATP hydrolysis. Has a chymotrypsin-like activity. Plays a major role in the degradation of misfolded proteins.</text>
</comment>
<comment type="catalytic activity">
    <reaction evidence="1">
        <text>Hydrolysis of proteins to small peptides in the presence of ATP and magnesium. alpha-casein is the usual test substrate. In the absence of ATP, only oligopeptides shorter than five residues are hydrolyzed (such as succinyl-Leu-Tyr-|-NHMec, and Leu-Tyr-Leu-|-Tyr-Trp, in which cleavage of the -Tyr-|-Leu- and -Tyr-|-Trp bonds also occurs).</text>
        <dbReference type="EC" id="3.4.21.92"/>
    </reaction>
</comment>
<comment type="subunit">
    <text evidence="1">Fourteen ClpP subunits assemble into 2 heptameric rings which stack back to back to give a disk-like structure with a central cavity, resembling the structure of eukaryotic proteasomes.</text>
</comment>
<comment type="subcellular location">
    <subcellularLocation>
        <location evidence="1">Cytoplasm</location>
    </subcellularLocation>
</comment>
<comment type="similarity">
    <text evidence="1">Belongs to the peptidase S14 family.</text>
</comment>
<protein>
    <recommendedName>
        <fullName evidence="1">ATP-dependent Clp protease proteolytic subunit</fullName>
        <ecNumber evidence="1">3.4.21.92</ecNumber>
    </recommendedName>
    <alternativeName>
        <fullName evidence="1">Endopeptidase Clp</fullName>
    </alternativeName>
</protein>
<accession>C5BTJ0</accession>
<proteinExistence type="inferred from homology"/>